<reference key="1">
    <citation type="journal article" date="2009" name="PLoS ONE">
        <title>Complete genome sequence of the aerobic CO-oxidizing thermophile Thermomicrobium roseum.</title>
        <authorList>
            <person name="Wu D."/>
            <person name="Raymond J."/>
            <person name="Wu M."/>
            <person name="Chatterji S."/>
            <person name="Ren Q."/>
            <person name="Graham J.E."/>
            <person name="Bryant D.A."/>
            <person name="Robb F."/>
            <person name="Colman A."/>
            <person name="Tallon L.J."/>
            <person name="Badger J.H."/>
            <person name="Madupu R."/>
            <person name="Ward N.L."/>
            <person name="Eisen J.A."/>
        </authorList>
    </citation>
    <scope>NUCLEOTIDE SEQUENCE [LARGE SCALE GENOMIC DNA]</scope>
    <source>
        <strain>ATCC 27502 / DSM 5159 / P-2</strain>
    </source>
</reference>
<dbReference type="EC" id="7.1.1.-" evidence="1"/>
<dbReference type="EMBL" id="CP001275">
    <property type="protein sequence ID" value="ACM05186.1"/>
    <property type="molecule type" value="Genomic_DNA"/>
</dbReference>
<dbReference type="RefSeq" id="WP_015922726.1">
    <property type="nucleotide sequence ID" value="NC_011959.1"/>
</dbReference>
<dbReference type="SMR" id="B9L173"/>
<dbReference type="STRING" id="309801.trd_1784"/>
<dbReference type="KEGG" id="tro:trd_1784"/>
<dbReference type="eggNOG" id="COG1005">
    <property type="taxonomic scope" value="Bacteria"/>
</dbReference>
<dbReference type="HOGENOM" id="CLU_015134_0_1_0"/>
<dbReference type="OrthoDB" id="9803734at2"/>
<dbReference type="Proteomes" id="UP000000447">
    <property type="component" value="Chromosome"/>
</dbReference>
<dbReference type="GO" id="GO:0005886">
    <property type="term" value="C:plasma membrane"/>
    <property type="evidence" value="ECO:0007669"/>
    <property type="project" value="UniProtKB-SubCell"/>
</dbReference>
<dbReference type="GO" id="GO:0003954">
    <property type="term" value="F:NADH dehydrogenase activity"/>
    <property type="evidence" value="ECO:0007669"/>
    <property type="project" value="TreeGrafter"/>
</dbReference>
<dbReference type="GO" id="GO:0016655">
    <property type="term" value="F:oxidoreductase activity, acting on NAD(P)H, quinone or similar compound as acceptor"/>
    <property type="evidence" value="ECO:0007669"/>
    <property type="project" value="UniProtKB-UniRule"/>
</dbReference>
<dbReference type="GO" id="GO:0048038">
    <property type="term" value="F:quinone binding"/>
    <property type="evidence" value="ECO:0007669"/>
    <property type="project" value="UniProtKB-KW"/>
</dbReference>
<dbReference type="GO" id="GO:0009060">
    <property type="term" value="P:aerobic respiration"/>
    <property type="evidence" value="ECO:0007669"/>
    <property type="project" value="TreeGrafter"/>
</dbReference>
<dbReference type="HAMAP" id="MF_01350">
    <property type="entry name" value="NDH1_NuoH"/>
    <property type="match status" value="1"/>
</dbReference>
<dbReference type="InterPro" id="IPR001694">
    <property type="entry name" value="NADH_UbQ_OxRdtase_su1/FPO"/>
</dbReference>
<dbReference type="InterPro" id="IPR018086">
    <property type="entry name" value="NADH_UbQ_OxRdtase_su1_CS"/>
</dbReference>
<dbReference type="NCBIfam" id="NF004741">
    <property type="entry name" value="PRK06076.1-2"/>
    <property type="match status" value="1"/>
</dbReference>
<dbReference type="PANTHER" id="PTHR11432">
    <property type="entry name" value="NADH DEHYDROGENASE SUBUNIT 1"/>
    <property type="match status" value="1"/>
</dbReference>
<dbReference type="PANTHER" id="PTHR11432:SF3">
    <property type="entry name" value="NADH-UBIQUINONE OXIDOREDUCTASE CHAIN 1"/>
    <property type="match status" value="1"/>
</dbReference>
<dbReference type="Pfam" id="PF00146">
    <property type="entry name" value="NADHdh"/>
    <property type="match status" value="1"/>
</dbReference>
<dbReference type="PROSITE" id="PS00667">
    <property type="entry name" value="COMPLEX1_ND1_1"/>
    <property type="match status" value="1"/>
</dbReference>
<dbReference type="PROSITE" id="PS00668">
    <property type="entry name" value="COMPLEX1_ND1_2"/>
    <property type="match status" value="1"/>
</dbReference>
<evidence type="ECO:0000255" key="1">
    <source>
        <dbReference type="HAMAP-Rule" id="MF_01350"/>
    </source>
</evidence>
<protein>
    <recommendedName>
        <fullName evidence="1">NADH-quinone oxidoreductase subunit H</fullName>
        <ecNumber evidence="1">7.1.1.-</ecNumber>
    </recommendedName>
    <alternativeName>
        <fullName evidence="1">NADH dehydrogenase I subunit H</fullName>
    </alternativeName>
    <alternativeName>
        <fullName evidence="1">NDH-1 subunit H</fullName>
    </alternativeName>
</protein>
<proteinExistence type="inferred from homology"/>
<sequence length="341" mass="37570">MDWQRLIVSYLVGFVLLNVLLGLMAYMTWFERRVLARMQHRVGPNRTGPFGLLQPIADGIKLLAKEDIVPANADRLVFLVAPLLSFALAPLGAAVIPFGDTLQLFGIEIPLLVADINVAVLYVLALGSVGVYGIILGGYASGNRYSLLGALRSTAQVISYELVLGLSLVGVFILSGSLSLQDILREQQRMLVLGPLTLPNWYILSQPLAFALFLIAAVAETNRAPFDLPEAETELVAGYFTEYSGFRFSFYFLAEYINMIVVSLLAATLFLGGIDGPFADGVWWLALKALFFLFFYVWLRATLPRFRYDQLMGLAWKVLLPLALLNIGLTGLVRLWGIGAL</sequence>
<gene>
    <name evidence="1" type="primary">nuoH</name>
    <name type="ordered locus">trd_1784</name>
</gene>
<accession>B9L173</accession>
<keyword id="KW-1003">Cell membrane</keyword>
<keyword id="KW-0472">Membrane</keyword>
<keyword id="KW-0520">NAD</keyword>
<keyword id="KW-0874">Quinone</keyword>
<keyword id="KW-1185">Reference proteome</keyword>
<keyword id="KW-1278">Translocase</keyword>
<keyword id="KW-0812">Transmembrane</keyword>
<keyword id="KW-1133">Transmembrane helix</keyword>
<keyword id="KW-0830">Ubiquinone</keyword>
<organism>
    <name type="scientific">Thermomicrobium roseum (strain ATCC 27502 / DSM 5159 / P-2)</name>
    <dbReference type="NCBI Taxonomy" id="309801"/>
    <lineage>
        <taxon>Bacteria</taxon>
        <taxon>Pseudomonadati</taxon>
        <taxon>Thermomicrobiota</taxon>
        <taxon>Thermomicrobia</taxon>
        <taxon>Thermomicrobiales</taxon>
        <taxon>Thermomicrobiaceae</taxon>
        <taxon>Thermomicrobium</taxon>
    </lineage>
</organism>
<name>NUOH_THERP</name>
<comment type="function">
    <text evidence="1">NDH-1 shuttles electrons from NADH, via FMN and iron-sulfur (Fe-S) centers, to quinones in the respiratory chain. The immediate electron acceptor for the enzyme in this species is believed to be ubiquinone. Couples the redox reaction to proton translocation (for every two electrons transferred, four hydrogen ions are translocated across the cytoplasmic membrane), and thus conserves the redox energy in a proton gradient. This subunit may bind ubiquinone.</text>
</comment>
<comment type="catalytic activity">
    <reaction evidence="1">
        <text>a quinone + NADH + 5 H(+)(in) = a quinol + NAD(+) + 4 H(+)(out)</text>
        <dbReference type="Rhea" id="RHEA:57888"/>
        <dbReference type="ChEBI" id="CHEBI:15378"/>
        <dbReference type="ChEBI" id="CHEBI:24646"/>
        <dbReference type="ChEBI" id="CHEBI:57540"/>
        <dbReference type="ChEBI" id="CHEBI:57945"/>
        <dbReference type="ChEBI" id="CHEBI:132124"/>
    </reaction>
</comment>
<comment type="subunit">
    <text evidence="1">NDH-1 is composed of 14 different subunits. Subunits NuoA, H, J, K, L, M, N constitute the membrane sector of the complex.</text>
</comment>
<comment type="subcellular location">
    <subcellularLocation>
        <location evidence="1">Cell membrane</location>
        <topology evidence="1">Multi-pass membrane protein</topology>
    </subcellularLocation>
</comment>
<comment type="similarity">
    <text evidence="1">Belongs to the complex I subunit 1 family.</text>
</comment>
<feature type="chain" id="PRO_1000166632" description="NADH-quinone oxidoreductase subunit H">
    <location>
        <begin position="1"/>
        <end position="341"/>
    </location>
</feature>
<feature type="transmembrane region" description="Helical" evidence="1">
    <location>
        <begin position="6"/>
        <end position="26"/>
    </location>
</feature>
<feature type="transmembrane region" description="Helical" evidence="1">
    <location>
        <begin position="76"/>
        <end position="96"/>
    </location>
</feature>
<feature type="transmembrane region" description="Helical" evidence="1">
    <location>
        <begin position="118"/>
        <end position="138"/>
    </location>
</feature>
<feature type="transmembrane region" description="Helical" evidence="1">
    <location>
        <begin position="157"/>
        <end position="177"/>
    </location>
</feature>
<feature type="transmembrane region" description="Helical" evidence="1">
    <location>
        <begin position="198"/>
        <end position="218"/>
    </location>
</feature>
<feature type="transmembrane region" description="Helical" evidence="1">
    <location>
        <begin position="252"/>
        <end position="272"/>
    </location>
</feature>
<feature type="transmembrane region" description="Helical" evidence="1">
    <location>
        <begin position="278"/>
        <end position="298"/>
    </location>
</feature>
<feature type="transmembrane region" description="Helical" evidence="1">
    <location>
        <begin position="313"/>
        <end position="333"/>
    </location>
</feature>